<comment type="function">
    <text evidence="1">Carboxylate--CoA ligase that may use 4-coumarate as substrate. Follows a two-step reaction mechanism, wherein the carboxylate substrate first undergoes adenylation by ATP, followed by a thioesterification in the presence of CoA to yield the final CoA thioester.</text>
</comment>
<comment type="catalytic activity">
    <reaction evidence="1">
        <text>(E)-4-coumarate + ATP + CoA = (E)-4-coumaroyl-CoA + AMP + diphosphate</text>
        <dbReference type="Rhea" id="RHEA:19641"/>
        <dbReference type="ChEBI" id="CHEBI:12876"/>
        <dbReference type="ChEBI" id="CHEBI:30616"/>
        <dbReference type="ChEBI" id="CHEBI:33019"/>
        <dbReference type="ChEBI" id="CHEBI:57287"/>
        <dbReference type="ChEBI" id="CHEBI:85008"/>
        <dbReference type="ChEBI" id="CHEBI:456215"/>
        <dbReference type="EC" id="6.2.1.12"/>
    </reaction>
    <physiologicalReaction direction="left-to-right" evidence="1">
        <dbReference type="Rhea" id="RHEA:19642"/>
    </physiologicalReaction>
</comment>
<comment type="catalytic activity">
    <reaction evidence="1">
        <text>(E)-4-coumarate + ATP + H(+) = (E)-4-coumaroyl-AMP + diphosphate</text>
        <dbReference type="Rhea" id="RHEA:72419"/>
        <dbReference type="ChEBI" id="CHEBI:12876"/>
        <dbReference type="ChEBI" id="CHEBI:15378"/>
        <dbReference type="ChEBI" id="CHEBI:30616"/>
        <dbReference type="ChEBI" id="CHEBI:33019"/>
        <dbReference type="ChEBI" id="CHEBI:192348"/>
    </reaction>
    <physiologicalReaction direction="left-to-right" evidence="1">
        <dbReference type="Rhea" id="RHEA:72420"/>
    </physiologicalReaction>
</comment>
<comment type="catalytic activity">
    <reaction evidence="1">
        <text>(E)-4-coumaroyl-AMP + CoA = (E)-4-coumaroyl-CoA + AMP + H(+)</text>
        <dbReference type="Rhea" id="RHEA:72423"/>
        <dbReference type="ChEBI" id="CHEBI:15378"/>
        <dbReference type="ChEBI" id="CHEBI:57287"/>
        <dbReference type="ChEBI" id="CHEBI:85008"/>
        <dbReference type="ChEBI" id="CHEBI:192348"/>
        <dbReference type="ChEBI" id="CHEBI:456215"/>
    </reaction>
    <physiologicalReaction direction="left-to-right" evidence="1">
        <dbReference type="Rhea" id="RHEA:72424"/>
    </physiologicalReaction>
</comment>
<comment type="cofactor">
    <cofactor evidence="1">
        <name>Mg(2+)</name>
        <dbReference type="ChEBI" id="CHEBI:18420"/>
    </cofactor>
</comment>
<comment type="pathway">
    <text evidence="2">Phytoalexin biosynthesis; 3,4',5-trihydroxystilbene biosynthesis; 3,4',5-trihydroxystilbene from trans-4-coumarate: step 1/2.</text>
</comment>
<comment type="domain">
    <text evidence="2">Both substrate-binding domains (SBD1 and SBD2) are involved in the substrate recognition, and are sufficient to confer the substrate specificity.</text>
</comment>
<comment type="similarity">
    <text evidence="3">Belongs to the ATP-dependent AMP-binding enzyme family.</text>
</comment>
<name>4CL1_SOLTU</name>
<gene>
    <name type="primary">4CL1</name>
    <name type="synonym">4CL-1</name>
</gene>
<accession>P31684</accession>
<evidence type="ECO:0000250" key="1">
    <source>
        <dbReference type="UniProtKB" id="O24146"/>
    </source>
</evidence>
<evidence type="ECO:0000250" key="2">
    <source>
        <dbReference type="UniProtKB" id="Q42524"/>
    </source>
</evidence>
<evidence type="ECO:0000305" key="3"/>
<feature type="chain" id="PRO_0000193036" description="4-coumarate--CoA ligase 1">
    <location>
        <begin position="1"/>
        <end position="545"/>
    </location>
</feature>
<feature type="region of interest" description="SBD1" evidence="2">
    <location>
        <begin position="265"/>
        <end position="334"/>
    </location>
</feature>
<feature type="region of interest" description="SBD2" evidence="2">
    <location>
        <begin position="335"/>
        <end position="402"/>
    </location>
</feature>
<feature type="binding site" evidence="1">
    <location>
        <position position="192"/>
    </location>
    <ligand>
        <name>ATP</name>
        <dbReference type="ChEBI" id="CHEBI:30616"/>
    </ligand>
</feature>
<feature type="binding site" evidence="1">
    <location>
        <position position="193"/>
    </location>
    <ligand>
        <name>ATP</name>
        <dbReference type="ChEBI" id="CHEBI:30616"/>
    </ligand>
</feature>
<feature type="binding site" evidence="1">
    <location>
        <position position="194"/>
    </location>
    <ligand>
        <name>ATP</name>
        <dbReference type="ChEBI" id="CHEBI:30616"/>
    </ligand>
</feature>
<feature type="binding site" evidence="1">
    <location>
        <position position="195"/>
    </location>
    <ligand>
        <name>ATP</name>
        <dbReference type="ChEBI" id="CHEBI:30616"/>
    </ligand>
</feature>
<feature type="binding site" evidence="1">
    <location>
        <position position="196"/>
    </location>
    <ligand>
        <name>ATP</name>
        <dbReference type="ChEBI" id="CHEBI:30616"/>
    </ligand>
</feature>
<feature type="binding site" evidence="1">
    <location>
        <position position="200"/>
    </location>
    <ligand>
        <name>ATP</name>
        <dbReference type="ChEBI" id="CHEBI:30616"/>
    </ligand>
</feature>
<feature type="binding site" evidence="1">
    <location>
        <position position="242"/>
    </location>
    <ligand>
        <name>(E)-4-coumaroyl-AMP</name>
        <dbReference type="ChEBI" id="CHEBI:192348"/>
    </ligand>
</feature>
<feature type="binding site" evidence="1">
    <location>
        <position position="246"/>
    </location>
    <ligand>
        <name>(E)-4-coumaroyl-AMP</name>
        <dbReference type="ChEBI" id="CHEBI:192348"/>
    </ligand>
</feature>
<feature type="binding site" evidence="1">
    <location>
        <position position="263"/>
    </location>
    <ligand>
        <name>CoA</name>
        <dbReference type="ChEBI" id="CHEBI:57287"/>
    </ligand>
</feature>
<feature type="binding site" evidence="1">
    <location>
        <position position="312"/>
    </location>
    <ligand>
        <name>(E)-4-coumaroyl-AMP</name>
        <dbReference type="ChEBI" id="CHEBI:192348"/>
    </ligand>
</feature>
<feature type="binding site" evidence="1">
    <location>
        <position position="334"/>
    </location>
    <ligand>
        <name>(E)-4-coumaroyl-AMP</name>
        <dbReference type="ChEBI" id="CHEBI:192348"/>
    </ligand>
</feature>
<feature type="binding site" evidence="1">
    <location>
        <position position="334"/>
    </location>
    <ligand>
        <name>ATP</name>
        <dbReference type="ChEBI" id="CHEBI:30616"/>
    </ligand>
</feature>
<feature type="binding site" evidence="1">
    <location>
        <position position="335"/>
    </location>
    <ligand>
        <name>(E)-4-coumaroyl-AMP</name>
        <dbReference type="ChEBI" id="CHEBI:192348"/>
    </ligand>
</feature>
<feature type="binding site" evidence="1">
    <location>
        <position position="335"/>
    </location>
    <ligand>
        <name>ATP</name>
        <dbReference type="ChEBI" id="CHEBI:30616"/>
    </ligand>
</feature>
<feature type="binding site" evidence="1">
    <location>
        <position position="339"/>
    </location>
    <ligand>
        <name>(E)-4-coumaroyl-AMP</name>
        <dbReference type="ChEBI" id="CHEBI:192348"/>
    </ligand>
</feature>
<feature type="binding site" evidence="1">
    <location>
        <position position="339"/>
    </location>
    <ligand>
        <name>ATP</name>
        <dbReference type="ChEBI" id="CHEBI:30616"/>
    </ligand>
</feature>
<feature type="binding site" evidence="1">
    <location>
        <position position="347"/>
    </location>
    <ligand>
        <name>(E)-4-coumaroyl-AMP</name>
        <dbReference type="ChEBI" id="CHEBI:192348"/>
    </ligand>
</feature>
<feature type="binding site" evidence="1">
    <location>
        <position position="423"/>
    </location>
    <ligand>
        <name>ATP</name>
        <dbReference type="ChEBI" id="CHEBI:30616"/>
    </ligand>
</feature>
<feature type="binding site" evidence="1">
    <location>
        <position position="438"/>
    </location>
    <ligand>
        <name>ATP</name>
        <dbReference type="ChEBI" id="CHEBI:30616"/>
    </ligand>
</feature>
<feature type="binding site" evidence="1">
    <location>
        <position position="440"/>
    </location>
    <ligand>
        <name>(E)-4-coumaroyl-AMP</name>
        <dbReference type="ChEBI" id="CHEBI:192348"/>
    </ligand>
</feature>
<feature type="binding site" evidence="1">
    <location>
        <position position="444"/>
    </location>
    <ligand>
        <name>(E)-4-coumaroyl-AMP</name>
        <dbReference type="ChEBI" id="CHEBI:192348"/>
    </ligand>
</feature>
<feature type="binding site" evidence="1">
    <location>
        <position position="446"/>
    </location>
    <ligand>
        <name>CoA</name>
        <dbReference type="ChEBI" id="CHEBI:57287"/>
    </ligand>
</feature>
<feature type="binding site" evidence="1">
    <location>
        <position position="447"/>
    </location>
    <ligand>
        <name>CoA</name>
        <dbReference type="ChEBI" id="CHEBI:57287"/>
    </ligand>
</feature>
<feature type="binding site" evidence="1">
    <location>
        <position position="529"/>
    </location>
    <ligand>
        <name>ATP</name>
        <dbReference type="ChEBI" id="CHEBI:30616"/>
    </ligand>
</feature>
<proteinExistence type="inferred from homology"/>
<organism>
    <name type="scientific">Solanum tuberosum</name>
    <name type="common">Potato</name>
    <dbReference type="NCBI Taxonomy" id="4113"/>
    <lineage>
        <taxon>Eukaryota</taxon>
        <taxon>Viridiplantae</taxon>
        <taxon>Streptophyta</taxon>
        <taxon>Embryophyta</taxon>
        <taxon>Tracheophyta</taxon>
        <taxon>Spermatophyta</taxon>
        <taxon>Magnoliopsida</taxon>
        <taxon>eudicotyledons</taxon>
        <taxon>Gunneridae</taxon>
        <taxon>Pentapetalae</taxon>
        <taxon>asterids</taxon>
        <taxon>lamiids</taxon>
        <taxon>Solanales</taxon>
        <taxon>Solanaceae</taxon>
        <taxon>Solanoideae</taxon>
        <taxon>Solaneae</taxon>
        <taxon>Solanum</taxon>
    </lineage>
</organism>
<sequence>MPMDTETKQSGDLIFRSKLPDIYIPKHLPLHSYCFENLSEFNSRPCLIDGANDRIYTYAEVELTSRKVAVGLNKLGIQQKDTIMILLPNCPEFVFAFIGASYLGAISTMANPLFTPAEVVKQAKASSAKIVITQACFAGKVKDYAIENDLKVICVDSVPEGCVHFSELIQSDEHEIPDVKIQPDDVVALPYSSGTTGLPKGVMLTHKGLVTSVAQQVDGENANLYMHSDDVLMCVLPLFHIYSLNSVLLCALRVGAAILIMQKFDIAQFLELIPKHKVTIGPFVPPIVLAIAKSPLVDNYDLSSVRTVMSGAAPLGKELEDAVRAKFPNAKLGQGYGMTEAGPVLAMCLAFAKEPFDIKSGACGTVVRNAEMKIVDPDTGCSLPRNQPGEICIRGDQIMKGYLNDPEATARTIEKEGWLHTGDIGFIDDDDELFIVDRLKELIKYKGFQVAPAELEALLINHPDISDAAVVPMIDEQAGEVPVAFVVRSNGSTITEDEVKDFISKQVIFYKRIKRVFFVETVPKSPSGKILRKDLRARLAAGISN</sequence>
<protein>
    <recommendedName>
        <fullName>4-coumarate--CoA ligase 1</fullName>
        <shortName>4CL 1</shortName>
        <ecNumber evidence="1">6.2.1.12</ecNumber>
    </recommendedName>
    <alternativeName>
        <fullName>4-coumaroyl-CoA synthase 1</fullName>
    </alternativeName>
</protein>
<reference key="1">
    <citation type="journal article" date="1991" name="J. Biol. Chem.">
        <title>Structural comparison, modes of expression, and putative cis-acting elements of the two 4-coumarate: CoA ligase genes in potato.</title>
        <authorList>
            <person name="Becker-Andre M."/>
            <person name="Schulze-Lefert P."/>
            <person name="Hahlbrock K."/>
        </authorList>
    </citation>
    <scope>NUCLEOTIDE SEQUENCE [GENOMIC DNA]</scope>
</reference>
<keyword id="KW-0067">ATP-binding</keyword>
<keyword id="KW-0436">Ligase</keyword>
<keyword id="KW-0460">Magnesium</keyword>
<keyword id="KW-0547">Nucleotide-binding</keyword>
<keyword id="KW-0587">Phenylpropanoid metabolism</keyword>
<keyword id="KW-1185">Reference proteome</keyword>
<dbReference type="EC" id="6.2.1.12" evidence="1"/>
<dbReference type="EMBL" id="M62755">
    <property type="protein sequence ID" value="AAA33842.1"/>
    <property type="molecule type" value="Genomic_DNA"/>
</dbReference>
<dbReference type="PIR" id="A39827">
    <property type="entry name" value="A39827"/>
</dbReference>
<dbReference type="RefSeq" id="NP_001305568.1">
    <property type="nucleotide sequence ID" value="NM_001318639.1"/>
</dbReference>
<dbReference type="SMR" id="P31684"/>
<dbReference type="FunCoup" id="P31684">
    <property type="interactions" value="1798"/>
</dbReference>
<dbReference type="STRING" id="4113.P31684"/>
<dbReference type="GeneID" id="102596056"/>
<dbReference type="KEGG" id="sot:102596056"/>
<dbReference type="InParanoid" id="P31684"/>
<dbReference type="OrthoDB" id="10253869at2759"/>
<dbReference type="UniPathway" id="UPA00372">
    <property type="reaction ID" value="UER00547"/>
</dbReference>
<dbReference type="Proteomes" id="UP000011115">
    <property type="component" value="Unassembled WGS sequence"/>
</dbReference>
<dbReference type="ExpressionAtlas" id="P31684">
    <property type="expression patterns" value="baseline and differential"/>
</dbReference>
<dbReference type="GO" id="GO:0016207">
    <property type="term" value="F:4-coumarate-CoA ligase activity"/>
    <property type="evidence" value="ECO:0007669"/>
    <property type="project" value="UniProtKB-EC"/>
</dbReference>
<dbReference type="GO" id="GO:0005524">
    <property type="term" value="F:ATP binding"/>
    <property type="evidence" value="ECO:0007669"/>
    <property type="project" value="UniProtKB-KW"/>
</dbReference>
<dbReference type="GO" id="GO:0016405">
    <property type="term" value="F:CoA-ligase activity"/>
    <property type="evidence" value="ECO:0000318"/>
    <property type="project" value="GO_Central"/>
</dbReference>
<dbReference type="GO" id="GO:0009698">
    <property type="term" value="P:phenylpropanoid metabolic process"/>
    <property type="evidence" value="ECO:0007669"/>
    <property type="project" value="UniProtKB-KW"/>
</dbReference>
<dbReference type="CDD" id="cd05904">
    <property type="entry name" value="4CL"/>
    <property type="match status" value="1"/>
</dbReference>
<dbReference type="FunFam" id="3.30.300.30:FF:000007">
    <property type="entry name" value="4-coumarate--CoA ligase 2"/>
    <property type="match status" value="1"/>
</dbReference>
<dbReference type="FunFam" id="3.40.50.12780:FF:000003">
    <property type="entry name" value="Long-chain-fatty-acid--CoA ligase FadD"/>
    <property type="match status" value="1"/>
</dbReference>
<dbReference type="Gene3D" id="3.30.300.30">
    <property type="match status" value="1"/>
</dbReference>
<dbReference type="Gene3D" id="3.40.50.12780">
    <property type="entry name" value="N-terminal domain of ligase-like"/>
    <property type="match status" value="1"/>
</dbReference>
<dbReference type="InterPro" id="IPR025110">
    <property type="entry name" value="AMP-bd_C"/>
</dbReference>
<dbReference type="InterPro" id="IPR045851">
    <property type="entry name" value="AMP-bd_C_sf"/>
</dbReference>
<dbReference type="InterPro" id="IPR020845">
    <property type="entry name" value="AMP-binding_CS"/>
</dbReference>
<dbReference type="InterPro" id="IPR000873">
    <property type="entry name" value="AMP-dep_synth/lig_dom"/>
</dbReference>
<dbReference type="InterPro" id="IPR042099">
    <property type="entry name" value="ANL_N_sf"/>
</dbReference>
<dbReference type="PANTHER" id="PTHR24096:SF402">
    <property type="entry name" value="4-COUMARATE--COA LIGASE 1"/>
    <property type="match status" value="1"/>
</dbReference>
<dbReference type="PANTHER" id="PTHR24096">
    <property type="entry name" value="LONG-CHAIN-FATTY-ACID--COA LIGASE"/>
    <property type="match status" value="1"/>
</dbReference>
<dbReference type="Pfam" id="PF00501">
    <property type="entry name" value="AMP-binding"/>
    <property type="match status" value="1"/>
</dbReference>
<dbReference type="Pfam" id="PF13193">
    <property type="entry name" value="AMP-binding_C"/>
    <property type="match status" value="1"/>
</dbReference>
<dbReference type="SUPFAM" id="SSF56801">
    <property type="entry name" value="Acetyl-CoA synthetase-like"/>
    <property type="match status" value="1"/>
</dbReference>
<dbReference type="PROSITE" id="PS00455">
    <property type="entry name" value="AMP_BINDING"/>
    <property type="match status" value="1"/>
</dbReference>